<protein>
    <recommendedName>
        <fullName evidence="1">Nucleotide-binding protein THEYE_A0235</fullName>
    </recommendedName>
</protein>
<dbReference type="EMBL" id="CP001147">
    <property type="protein sequence ID" value="ACI20814.1"/>
    <property type="molecule type" value="Genomic_DNA"/>
</dbReference>
<dbReference type="RefSeq" id="WP_012545545.1">
    <property type="nucleotide sequence ID" value="NC_011296.1"/>
</dbReference>
<dbReference type="RefSeq" id="YP_002248084.1">
    <property type="nucleotide sequence ID" value="NC_011296.1"/>
</dbReference>
<dbReference type="SMR" id="B5YI18"/>
<dbReference type="FunCoup" id="B5YI18">
    <property type="interactions" value="149"/>
</dbReference>
<dbReference type="STRING" id="289376.THEYE_A0235"/>
<dbReference type="EnsemblBacteria" id="ACI20814">
    <property type="protein sequence ID" value="ACI20814"/>
    <property type="gene ID" value="THEYE_A0235"/>
</dbReference>
<dbReference type="KEGG" id="tye:THEYE_A0235"/>
<dbReference type="PATRIC" id="fig|289376.4.peg.232"/>
<dbReference type="eggNOG" id="COG1660">
    <property type="taxonomic scope" value="Bacteria"/>
</dbReference>
<dbReference type="HOGENOM" id="CLU_059558_0_0_0"/>
<dbReference type="InParanoid" id="B5YI18"/>
<dbReference type="OrthoDB" id="9784461at2"/>
<dbReference type="Proteomes" id="UP000000718">
    <property type="component" value="Chromosome"/>
</dbReference>
<dbReference type="GO" id="GO:0005524">
    <property type="term" value="F:ATP binding"/>
    <property type="evidence" value="ECO:0007669"/>
    <property type="project" value="UniProtKB-UniRule"/>
</dbReference>
<dbReference type="GO" id="GO:0005525">
    <property type="term" value="F:GTP binding"/>
    <property type="evidence" value="ECO:0007669"/>
    <property type="project" value="UniProtKB-UniRule"/>
</dbReference>
<dbReference type="GO" id="GO:0060090">
    <property type="term" value="F:molecular adaptor activity"/>
    <property type="evidence" value="ECO:0000318"/>
    <property type="project" value="GO_Central"/>
</dbReference>
<dbReference type="HAMAP" id="MF_00636">
    <property type="entry name" value="RapZ_like"/>
    <property type="match status" value="1"/>
</dbReference>
<dbReference type="InterPro" id="IPR027417">
    <property type="entry name" value="P-loop_NTPase"/>
</dbReference>
<dbReference type="InterPro" id="IPR005337">
    <property type="entry name" value="RapZ-like"/>
</dbReference>
<dbReference type="InterPro" id="IPR053930">
    <property type="entry name" value="RapZ-like_N"/>
</dbReference>
<dbReference type="InterPro" id="IPR053931">
    <property type="entry name" value="RapZ_C"/>
</dbReference>
<dbReference type="NCBIfam" id="NF003828">
    <property type="entry name" value="PRK05416.1"/>
    <property type="match status" value="1"/>
</dbReference>
<dbReference type="PANTHER" id="PTHR30448">
    <property type="entry name" value="RNASE ADAPTER PROTEIN RAPZ"/>
    <property type="match status" value="1"/>
</dbReference>
<dbReference type="PANTHER" id="PTHR30448:SF0">
    <property type="entry name" value="RNASE ADAPTER PROTEIN RAPZ"/>
    <property type="match status" value="1"/>
</dbReference>
<dbReference type="Pfam" id="PF22740">
    <property type="entry name" value="PapZ_C"/>
    <property type="match status" value="1"/>
</dbReference>
<dbReference type="Pfam" id="PF03668">
    <property type="entry name" value="RapZ-like_N"/>
    <property type="match status" value="1"/>
</dbReference>
<dbReference type="PIRSF" id="PIRSF005052">
    <property type="entry name" value="P-loopkin"/>
    <property type="match status" value="1"/>
</dbReference>
<dbReference type="SUPFAM" id="SSF52540">
    <property type="entry name" value="P-loop containing nucleoside triphosphate hydrolases"/>
    <property type="match status" value="1"/>
</dbReference>
<proteinExistence type="inferred from homology"/>
<sequence>MNFDKFIVIVTGLSGGGKTVTLRTLEDIGFFCVDNLPPPIVLEFLGMLNEYSSFKNIAIGIDIRVQQFLEKATELIKRIKDIYKIEVLFLEADDDTILLRYKETRRPHPLSTHYNDLHKAIKQERELLYPLRCLSDRIIDTSNLNPHELKFLIRSMYGAEKISPSITIISFGYKKGIPANADLIFDARFLPNPYFIPSLTDLNGKDKPVKDFVLKQNETIEFLTYIKNFLSFAVSGYKREGRAYVTIAIGCTGGRHRSVVLVEEIADYLRSLSLNPVVIHRDL</sequence>
<reference key="1">
    <citation type="submission" date="2008-08" db="EMBL/GenBank/DDBJ databases">
        <title>The complete genome sequence of Thermodesulfovibrio yellowstonii strain ATCC 51303 / DSM 11347 / YP87.</title>
        <authorList>
            <person name="Dodson R.J."/>
            <person name="Durkin A.S."/>
            <person name="Wu M."/>
            <person name="Eisen J."/>
            <person name="Sutton G."/>
        </authorList>
    </citation>
    <scope>NUCLEOTIDE SEQUENCE [LARGE SCALE GENOMIC DNA]</scope>
    <source>
        <strain>ATCC 51303 / DSM 11347 / YP87</strain>
    </source>
</reference>
<feature type="chain" id="PRO_0000383299" description="Nucleotide-binding protein THEYE_A0235">
    <location>
        <begin position="1"/>
        <end position="283"/>
    </location>
</feature>
<feature type="binding site" evidence="1">
    <location>
        <begin position="12"/>
        <end position="19"/>
    </location>
    <ligand>
        <name>ATP</name>
        <dbReference type="ChEBI" id="CHEBI:30616"/>
    </ligand>
</feature>
<feature type="binding site" evidence="1">
    <location>
        <begin position="62"/>
        <end position="65"/>
    </location>
    <ligand>
        <name>GTP</name>
        <dbReference type="ChEBI" id="CHEBI:37565"/>
    </ligand>
</feature>
<name>Y235_THEYD</name>
<keyword id="KW-0067">ATP-binding</keyword>
<keyword id="KW-0342">GTP-binding</keyword>
<keyword id="KW-0547">Nucleotide-binding</keyword>
<keyword id="KW-1185">Reference proteome</keyword>
<evidence type="ECO:0000255" key="1">
    <source>
        <dbReference type="HAMAP-Rule" id="MF_00636"/>
    </source>
</evidence>
<gene>
    <name type="ordered locus">THEYE_A0235</name>
</gene>
<accession>B5YI18</accession>
<comment type="function">
    <text evidence="1">Displays ATPase and GTPase activities.</text>
</comment>
<comment type="similarity">
    <text evidence="1">Belongs to the RapZ-like family.</text>
</comment>
<organism>
    <name type="scientific">Thermodesulfovibrio yellowstonii (strain ATCC 51303 / DSM 11347 / YP87)</name>
    <dbReference type="NCBI Taxonomy" id="289376"/>
    <lineage>
        <taxon>Bacteria</taxon>
        <taxon>Pseudomonadati</taxon>
        <taxon>Nitrospirota</taxon>
        <taxon>Thermodesulfovibrionia</taxon>
        <taxon>Thermodesulfovibrionales</taxon>
        <taxon>Thermodesulfovibrionaceae</taxon>
        <taxon>Thermodesulfovibrio</taxon>
    </lineage>
</organism>